<feature type="peptide" id="PRO_0000398138" description="Venom peptide Ocy2" evidence="1">
    <location>
        <begin position="1"/>
        <end position="11" status="greater than"/>
    </location>
</feature>
<feature type="non-terminal residue" evidence="2">
    <location>
        <position position="11"/>
    </location>
</feature>
<reference evidence="3" key="1">
    <citation type="journal article" date="2008" name="Toxicon">
        <title>Mass spectrometry analysis, amino acid sequence and biological activity of venom components from the Brazilian scorpion Opisthacanthus cayaporum.</title>
        <authorList>
            <person name="Schwartz E.F."/>
            <person name="Camargos T.S."/>
            <person name="Zamudio F.Z."/>
            <person name="Silva L.P."/>
            <person name="Bloch C. Jr."/>
            <person name="Caixeta F."/>
            <person name="Schwartz C.A."/>
            <person name="Possani L.D."/>
        </authorList>
    </citation>
    <scope>PROTEIN SEQUENCE</scope>
    <scope>SUBCELLULAR LOCATION</scope>
    <scope>TISSUE SPECIFICITY</scope>
    <scope>MASS SPECTROMETRY</scope>
    <source>
        <tissue evidence="1">Venom</tissue>
    </source>
</reference>
<accession>P86107</accession>
<organism>
    <name type="scientific">Opisthacanthus cayaporum</name>
    <name type="common">South American scorpion</name>
    <dbReference type="NCBI Taxonomy" id="573324"/>
    <lineage>
        <taxon>Eukaryota</taxon>
        <taxon>Metazoa</taxon>
        <taxon>Ecdysozoa</taxon>
        <taxon>Arthropoda</taxon>
        <taxon>Chelicerata</taxon>
        <taxon>Arachnida</taxon>
        <taxon>Scorpiones</taxon>
        <taxon>Iurida</taxon>
        <taxon>Scorpionoidea</taxon>
        <taxon>Hemiscorpiidae</taxon>
        <taxon>Opisthacanthus</taxon>
    </lineage>
</organism>
<protein>
    <recommendedName>
        <fullName>Venom peptide Ocy2</fullName>
    </recommendedName>
</protein>
<dbReference type="GO" id="GO:0005576">
    <property type="term" value="C:extracellular region"/>
    <property type="evidence" value="ECO:0007669"/>
    <property type="project" value="UniProtKB-SubCell"/>
</dbReference>
<keyword id="KW-0903">Direct protein sequencing</keyword>
<keyword id="KW-0964">Secreted</keyword>
<comment type="subcellular location">
    <subcellularLocation>
        <location evidence="1">Secreted</location>
    </subcellularLocation>
</comment>
<comment type="tissue specificity">
    <text evidence="1">Expressed by the venom gland.</text>
</comment>
<comment type="mass spectrometry"/>
<proteinExistence type="evidence at protein level"/>
<sequence>XNPELRCGLKD</sequence>
<evidence type="ECO:0000269" key="1">
    <source>
    </source>
</evidence>
<evidence type="ECO:0000303" key="2">
    <source>
    </source>
</evidence>
<evidence type="ECO:0000305" key="3"/>
<name>VP02_OPICY</name>